<proteinExistence type="inferred from homology"/>
<keyword id="KW-0963">Cytoplasm</keyword>
<keyword id="KW-0671">Queuosine biosynthesis</keyword>
<keyword id="KW-0949">S-adenosyl-L-methionine</keyword>
<keyword id="KW-0808">Transferase</keyword>
<name>QUEA_BRUSU</name>
<accession>P65949</accession>
<accession>G0KA14</accession>
<accession>Q8YHB3</accession>
<dbReference type="EC" id="2.4.99.17" evidence="1"/>
<dbReference type="EMBL" id="AE014291">
    <property type="protein sequence ID" value="AAN30012.1"/>
    <property type="molecule type" value="Genomic_DNA"/>
</dbReference>
<dbReference type="EMBL" id="CP002997">
    <property type="protein sequence ID" value="AEM18430.1"/>
    <property type="molecule type" value="Genomic_DNA"/>
</dbReference>
<dbReference type="RefSeq" id="WP_002964220.1">
    <property type="nucleotide sequence ID" value="NZ_KN046804.1"/>
</dbReference>
<dbReference type="SMR" id="P65949"/>
<dbReference type="GeneID" id="97533650"/>
<dbReference type="KEGG" id="bms:BR1092"/>
<dbReference type="KEGG" id="bsi:BS1330_I1088"/>
<dbReference type="PATRIC" id="fig|204722.21.peg.2195"/>
<dbReference type="HOGENOM" id="CLU_039110_1_1_5"/>
<dbReference type="PhylomeDB" id="P65949"/>
<dbReference type="UniPathway" id="UPA00392"/>
<dbReference type="Proteomes" id="UP000007104">
    <property type="component" value="Chromosome I"/>
</dbReference>
<dbReference type="GO" id="GO:0005737">
    <property type="term" value="C:cytoplasm"/>
    <property type="evidence" value="ECO:0007669"/>
    <property type="project" value="UniProtKB-SubCell"/>
</dbReference>
<dbReference type="GO" id="GO:0051075">
    <property type="term" value="F:S-adenosylmethionine:tRNA ribosyltransferase-isomerase activity"/>
    <property type="evidence" value="ECO:0007669"/>
    <property type="project" value="UniProtKB-EC"/>
</dbReference>
<dbReference type="GO" id="GO:0008616">
    <property type="term" value="P:queuosine biosynthetic process"/>
    <property type="evidence" value="ECO:0007669"/>
    <property type="project" value="UniProtKB-UniRule"/>
</dbReference>
<dbReference type="GO" id="GO:0002099">
    <property type="term" value="P:tRNA wobble guanine modification"/>
    <property type="evidence" value="ECO:0007669"/>
    <property type="project" value="TreeGrafter"/>
</dbReference>
<dbReference type="FunFam" id="3.40.1780.10:FF:000001">
    <property type="entry name" value="S-adenosylmethionine:tRNA ribosyltransferase-isomerase"/>
    <property type="match status" value="1"/>
</dbReference>
<dbReference type="Gene3D" id="2.40.10.240">
    <property type="entry name" value="QueA-like"/>
    <property type="match status" value="1"/>
</dbReference>
<dbReference type="Gene3D" id="3.40.1780.10">
    <property type="entry name" value="QueA-like"/>
    <property type="match status" value="1"/>
</dbReference>
<dbReference type="HAMAP" id="MF_00113">
    <property type="entry name" value="QueA"/>
    <property type="match status" value="1"/>
</dbReference>
<dbReference type="InterPro" id="IPR003699">
    <property type="entry name" value="QueA"/>
</dbReference>
<dbReference type="InterPro" id="IPR042118">
    <property type="entry name" value="QueA_dom1"/>
</dbReference>
<dbReference type="InterPro" id="IPR042119">
    <property type="entry name" value="QueA_dom2"/>
</dbReference>
<dbReference type="InterPro" id="IPR036100">
    <property type="entry name" value="QueA_sf"/>
</dbReference>
<dbReference type="NCBIfam" id="NF001140">
    <property type="entry name" value="PRK00147.1"/>
    <property type="match status" value="1"/>
</dbReference>
<dbReference type="NCBIfam" id="TIGR00113">
    <property type="entry name" value="queA"/>
    <property type="match status" value="1"/>
</dbReference>
<dbReference type="PANTHER" id="PTHR30307">
    <property type="entry name" value="S-ADENOSYLMETHIONINE:TRNA RIBOSYLTRANSFERASE-ISOMERASE"/>
    <property type="match status" value="1"/>
</dbReference>
<dbReference type="PANTHER" id="PTHR30307:SF0">
    <property type="entry name" value="S-ADENOSYLMETHIONINE:TRNA RIBOSYLTRANSFERASE-ISOMERASE"/>
    <property type="match status" value="1"/>
</dbReference>
<dbReference type="Pfam" id="PF02547">
    <property type="entry name" value="Queuosine_synth"/>
    <property type="match status" value="1"/>
</dbReference>
<dbReference type="SUPFAM" id="SSF111337">
    <property type="entry name" value="QueA-like"/>
    <property type="match status" value="1"/>
</dbReference>
<evidence type="ECO:0000255" key="1">
    <source>
        <dbReference type="HAMAP-Rule" id="MF_00113"/>
    </source>
</evidence>
<gene>
    <name evidence="1" type="primary">queA</name>
    <name type="ordered locus">BR1092</name>
    <name type="ordered locus">BS1330_I1088</name>
</gene>
<sequence>MRVDLFDFDLPEERIALRPVEPRDHAKLLHVRPGEPFEDRHVYDLPDLLQPGDALVFNDTKVIPAQLEGMRERTGNISQVSATLHMRVGPDRWKAFLRPAKRVKEGDRIRFGHSGTSCFLGTLDATVAEKGDSGEALLVFDLSGAVLDEAIAAVGHIPLPPYIASKRPEDERDRKDYQTVYAREEGAVAAPTAGLHFTPDLLEKIKARGIEEHFVTLHVGAGTFLPVKADDTGDHKMHAEIGHVSQRTASALNAVHERGGRIICVGTTSLRLIESATGEDGVVRPWSGATDIFITPGYRFRAVDLLMTNFHLPRSTLFMLVSAFSGLDTMHAAYNYAIADGYRFYSYGDASLLERIDHDRHSA</sequence>
<organism>
    <name type="scientific">Brucella suis biovar 1 (strain 1330)</name>
    <dbReference type="NCBI Taxonomy" id="204722"/>
    <lineage>
        <taxon>Bacteria</taxon>
        <taxon>Pseudomonadati</taxon>
        <taxon>Pseudomonadota</taxon>
        <taxon>Alphaproteobacteria</taxon>
        <taxon>Hyphomicrobiales</taxon>
        <taxon>Brucellaceae</taxon>
        <taxon>Brucella/Ochrobactrum group</taxon>
        <taxon>Brucella</taxon>
    </lineage>
</organism>
<comment type="function">
    <text evidence="1">Transfers and isomerizes the ribose moiety from AdoMet to the 7-aminomethyl group of 7-deazaguanine (preQ1-tRNA) to give epoxyqueuosine (oQ-tRNA).</text>
</comment>
<comment type="catalytic activity">
    <reaction evidence="1">
        <text>7-aminomethyl-7-carbaguanosine(34) in tRNA + S-adenosyl-L-methionine = epoxyqueuosine(34) in tRNA + adenine + L-methionine + 2 H(+)</text>
        <dbReference type="Rhea" id="RHEA:32155"/>
        <dbReference type="Rhea" id="RHEA-COMP:10342"/>
        <dbReference type="Rhea" id="RHEA-COMP:18582"/>
        <dbReference type="ChEBI" id="CHEBI:15378"/>
        <dbReference type="ChEBI" id="CHEBI:16708"/>
        <dbReference type="ChEBI" id="CHEBI:57844"/>
        <dbReference type="ChEBI" id="CHEBI:59789"/>
        <dbReference type="ChEBI" id="CHEBI:82833"/>
        <dbReference type="ChEBI" id="CHEBI:194443"/>
        <dbReference type="EC" id="2.4.99.17"/>
    </reaction>
</comment>
<comment type="pathway">
    <text evidence="1">tRNA modification; tRNA-queuosine biosynthesis.</text>
</comment>
<comment type="subunit">
    <text evidence="1">Monomer.</text>
</comment>
<comment type="subcellular location">
    <subcellularLocation>
        <location evidence="1">Cytoplasm</location>
    </subcellularLocation>
</comment>
<comment type="similarity">
    <text evidence="1">Belongs to the QueA family.</text>
</comment>
<protein>
    <recommendedName>
        <fullName evidence="1">S-adenosylmethionine:tRNA ribosyltransferase-isomerase</fullName>
        <ecNumber evidence="1">2.4.99.17</ecNumber>
    </recommendedName>
    <alternativeName>
        <fullName evidence="1">Queuosine biosynthesis protein QueA</fullName>
    </alternativeName>
</protein>
<reference key="1">
    <citation type="journal article" date="2002" name="Proc. Natl. Acad. Sci. U.S.A.">
        <title>The Brucella suis genome reveals fundamental similarities between animal and plant pathogens and symbionts.</title>
        <authorList>
            <person name="Paulsen I.T."/>
            <person name="Seshadri R."/>
            <person name="Nelson K.E."/>
            <person name="Eisen J.A."/>
            <person name="Heidelberg J.F."/>
            <person name="Read T.D."/>
            <person name="Dodson R.J."/>
            <person name="Umayam L.A."/>
            <person name="Brinkac L.M."/>
            <person name="Beanan M.J."/>
            <person name="Daugherty S.C."/>
            <person name="DeBoy R.T."/>
            <person name="Durkin A.S."/>
            <person name="Kolonay J.F."/>
            <person name="Madupu R."/>
            <person name="Nelson W.C."/>
            <person name="Ayodeji B."/>
            <person name="Kraul M."/>
            <person name="Shetty J."/>
            <person name="Malek J.A."/>
            <person name="Van Aken S.E."/>
            <person name="Riedmuller S."/>
            <person name="Tettelin H."/>
            <person name="Gill S.R."/>
            <person name="White O."/>
            <person name="Salzberg S.L."/>
            <person name="Hoover D.L."/>
            <person name="Lindler L.E."/>
            <person name="Halling S.M."/>
            <person name="Boyle S.M."/>
            <person name="Fraser C.M."/>
        </authorList>
    </citation>
    <scope>NUCLEOTIDE SEQUENCE [LARGE SCALE GENOMIC DNA]</scope>
    <source>
        <strain>1330</strain>
    </source>
</reference>
<reference key="2">
    <citation type="journal article" date="2011" name="J. Bacteriol.">
        <title>Revised genome sequence of Brucella suis 1330.</title>
        <authorList>
            <person name="Tae H."/>
            <person name="Shallom S."/>
            <person name="Settlage R."/>
            <person name="Preston D."/>
            <person name="Adams L.G."/>
            <person name="Garner H.R."/>
        </authorList>
    </citation>
    <scope>NUCLEOTIDE SEQUENCE [LARGE SCALE GENOMIC DNA]</scope>
    <source>
        <strain>1330</strain>
    </source>
</reference>
<feature type="chain" id="PRO_0000165387" description="S-adenosylmethionine:tRNA ribosyltransferase-isomerase">
    <location>
        <begin position="1"/>
        <end position="363"/>
    </location>
</feature>